<name>YNFA_ECOSM</name>
<proteinExistence type="inferred from homology"/>
<organism>
    <name type="scientific">Escherichia coli (strain SMS-3-5 / SECEC)</name>
    <dbReference type="NCBI Taxonomy" id="439855"/>
    <lineage>
        <taxon>Bacteria</taxon>
        <taxon>Pseudomonadati</taxon>
        <taxon>Pseudomonadota</taxon>
        <taxon>Gammaproteobacteria</taxon>
        <taxon>Enterobacterales</taxon>
        <taxon>Enterobacteriaceae</taxon>
        <taxon>Escherichia</taxon>
    </lineage>
</organism>
<keyword id="KW-0997">Cell inner membrane</keyword>
<keyword id="KW-1003">Cell membrane</keyword>
<keyword id="KW-0472">Membrane</keyword>
<keyword id="KW-0812">Transmembrane</keyword>
<keyword id="KW-1133">Transmembrane helix</keyword>
<gene>
    <name evidence="1" type="primary">ynfA</name>
    <name type="ordered locus">EcSMS35_1618</name>
</gene>
<accession>B1LEV4</accession>
<protein>
    <recommendedName>
        <fullName evidence="1">UPF0060 membrane protein YnfA</fullName>
    </recommendedName>
</protein>
<sequence length="108" mass="11887">MIKTTLLFFATALCEIIGCFLPWLWLKRNASIWLLLPAGISLALFVWLLTLHPAASGRVYAAYGGVYVCTALIWLRVVDGVKLSLYDWTGALIALCGMLIIVAGWGRT</sequence>
<dbReference type="EMBL" id="CP000970">
    <property type="protein sequence ID" value="ACB19514.1"/>
    <property type="molecule type" value="Genomic_DNA"/>
</dbReference>
<dbReference type="RefSeq" id="WP_001469615.1">
    <property type="nucleotide sequence ID" value="NC_010498.1"/>
</dbReference>
<dbReference type="SMR" id="B1LEV4"/>
<dbReference type="KEGG" id="ecm:EcSMS35_1618"/>
<dbReference type="HOGENOM" id="CLU_117653_2_1_6"/>
<dbReference type="Proteomes" id="UP000007011">
    <property type="component" value="Chromosome"/>
</dbReference>
<dbReference type="GO" id="GO:0005886">
    <property type="term" value="C:plasma membrane"/>
    <property type="evidence" value="ECO:0007669"/>
    <property type="project" value="UniProtKB-SubCell"/>
</dbReference>
<dbReference type="HAMAP" id="MF_00010">
    <property type="entry name" value="UPF0060"/>
    <property type="match status" value="1"/>
</dbReference>
<dbReference type="InterPro" id="IPR003844">
    <property type="entry name" value="UPF0060"/>
</dbReference>
<dbReference type="NCBIfam" id="NF002586">
    <property type="entry name" value="PRK02237.1"/>
    <property type="match status" value="1"/>
</dbReference>
<dbReference type="PANTHER" id="PTHR36116">
    <property type="entry name" value="UPF0060 MEMBRANE PROTEIN YNFA"/>
    <property type="match status" value="1"/>
</dbReference>
<dbReference type="PANTHER" id="PTHR36116:SF1">
    <property type="entry name" value="UPF0060 MEMBRANE PROTEIN YNFA"/>
    <property type="match status" value="1"/>
</dbReference>
<dbReference type="Pfam" id="PF02694">
    <property type="entry name" value="UPF0060"/>
    <property type="match status" value="1"/>
</dbReference>
<dbReference type="SUPFAM" id="SSF103481">
    <property type="entry name" value="Multidrug resistance efflux transporter EmrE"/>
    <property type="match status" value="1"/>
</dbReference>
<evidence type="ECO:0000255" key="1">
    <source>
        <dbReference type="HAMAP-Rule" id="MF_00010"/>
    </source>
</evidence>
<reference key="1">
    <citation type="journal article" date="2008" name="J. Bacteriol.">
        <title>Insights into the environmental resistance gene pool from the genome sequence of the multidrug-resistant environmental isolate Escherichia coli SMS-3-5.</title>
        <authorList>
            <person name="Fricke W.F."/>
            <person name="Wright M.S."/>
            <person name="Lindell A.H."/>
            <person name="Harkins D.M."/>
            <person name="Baker-Austin C."/>
            <person name="Ravel J."/>
            <person name="Stepanauskas R."/>
        </authorList>
    </citation>
    <scope>NUCLEOTIDE SEQUENCE [LARGE SCALE GENOMIC DNA]</scope>
    <source>
        <strain>SMS-3-5 / SECEC</strain>
    </source>
</reference>
<comment type="subcellular location">
    <subcellularLocation>
        <location evidence="1">Cell inner membrane</location>
        <topology evidence="1">Multi-pass membrane protein</topology>
    </subcellularLocation>
</comment>
<comment type="similarity">
    <text evidence="1">Belongs to the UPF0060 family.</text>
</comment>
<feature type="chain" id="PRO_1000197487" description="UPF0060 membrane protein YnfA">
    <location>
        <begin position="1"/>
        <end position="108"/>
    </location>
</feature>
<feature type="topological domain" description="Periplasmic" evidence="1">
    <location>
        <begin position="1"/>
        <end position="5"/>
    </location>
</feature>
<feature type="transmembrane region" description="Helical" evidence="1">
    <location>
        <begin position="6"/>
        <end position="26"/>
    </location>
</feature>
<feature type="topological domain" description="Cytoplasmic" evidence="1">
    <location>
        <begin position="27"/>
        <end position="30"/>
    </location>
</feature>
<feature type="transmembrane region" description="Helical" evidence="1">
    <location>
        <begin position="31"/>
        <end position="51"/>
    </location>
</feature>
<feature type="topological domain" description="Periplasmic" evidence="1">
    <location>
        <begin position="52"/>
        <end position="60"/>
    </location>
</feature>
<feature type="transmembrane region" description="Helical" evidence="1">
    <location>
        <begin position="61"/>
        <end position="81"/>
    </location>
</feature>
<feature type="topological domain" description="Cytoplasmic" evidence="1">
    <location>
        <begin position="82"/>
        <end position="84"/>
    </location>
</feature>
<feature type="transmembrane region" description="Helical" evidence="1">
    <location>
        <begin position="85"/>
        <end position="105"/>
    </location>
</feature>
<feature type="topological domain" description="Periplasmic" evidence="1">
    <location>
        <begin position="106"/>
        <end position="108"/>
    </location>
</feature>